<sequence>MNNTIINSLIGGDDSIKRSNVFAVDSQIPTLYMPQYISLSGVMTNDGPDNQAIASFEIRDQYITALNHLVLSLELPEVKGMGRFGYVPYVGYKCINHVSISSCNGVIWEIEGEELYNNCINNTIALKHSGYSSELNDISIGLTPNDTIKEPSTVYVYIKTPFDVEDTFSSLKLSDSKITVTVTFNPVSDIVIRDSSFDFETFNKEFVYVPELSFIGYMVKNVQIKPSFIEKPRRVIGQINQPTATVTEVHAATSLSVYTKPYYGNTDNKFISYPGYSQDEKDYIDAYVSRLLDDLVIVSDGPPTGYPESAEIVEVPEDGIVSIQDADVYVKIDNVPDNMSVYLHTNLLMFGTRKNSFIYNISKKFSAITGTYSDATKRTIFAHISHSINIIDTSIPVSLWTSQRNVYNGDNRSAESKAKDLFINDPFIKGIDFKNKTDIISRLEVRFGNDVLYSENGPISRIYNELLTKSNNGTRTLTFNFTPKIFFRPTTITANVSRGKDKLSVRVVYSTMDVNHPIYYVQKQLVVVCNDLYKVSYDQGVSITKIMGDNN</sequence>
<feature type="chain" id="PRO_0000099125" description="Scaffold protein OPG125">
    <location>
        <begin position="1"/>
        <end position="551"/>
    </location>
</feature>
<dbReference type="EMBL" id="M16556">
    <property type="protein sequence ID" value="AAA48305.1"/>
    <property type="molecule type" value="Genomic_DNA"/>
</dbReference>
<dbReference type="EMBL" id="M35027">
    <property type="protein sequence ID" value="AAA48114.1"/>
    <property type="molecule type" value="Genomic_DNA"/>
</dbReference>
<dbReference type="PIR" id="C01146">
    <property type="entry name" value="QQVZ25"/>
</dbReference>
<dbReference type="RefSeq" id="YP_233000.1">
    <property type="nucleotide sequence ID" value="NC_006998.1"/>
</dbReference>
<dbReference type="SMR" id="P68441"/>
<dbReference type="DNASU" id="3707516"/>
<dbReference type="GeneID" id="3707516"/>
<dbReference type="KEGG" id="vg:3707516"/>
<dbReference type="Proteomes" id="UP000008269">
    <property type="component" value="Segment"/>
</dbReference>
<dbReference type="GO" id="GO:0016020">
    <property type="term" value="C:membrane"/>
    <property type="evidence" value="ECO:0007669"/>
    <property type="project" value="UniProtKB-SubCell"/>
</dbReference>
<dbReference type="GO" id="GO:0046677">
    <property type="term" value="P:response to antibiotic"/>
    <property type="evidence" value="ECO:0007669"/>
    <property type="project" value="InterPro"/>
</dbReference>
<dbReference type="Gene3D" id="2.70.9.10">
    <property type="entry name" value="Adenovirus Type 2 Hexon, domain 4"/>
    <property type="match status" value="1"/>
</dbReference>
<dbReference type="InterPro" id="IPR005008">
    <property type="entry name" value="Poxvirus_Rif-R"/>
</dbReference>
<dbReference type="Pfam" id="PF03340">
    <property type="entry name" value="Pox_Rif"/>
    <property type="match status" value="1"/>
</dbReference>
<keyword id="KW-0426">Late protein</keyword>
<keyword id="KW-0472">Membrane</keyword>
<keyword id="KW-1185">Reference proteome</keyword>
<proteinExistence type="evidence at transcript level"/>
<protein>
    <recommendedName>
        <fullName>Scaffold protein OPG125</fullName>
    </recommendedName>
    <alternativeName>
        <fullName>62 kDa protein</fullName>
    </alternativeName>
    <alternativeName>
        <fullName>Rifampicin resistance protein</fullName>
    </alternativeName>
</protein>
<organismHost>
    <name type="scientific">Homo sapiens</name>
    <name type="common">Human</name>
    <dbReference type="NCBI Taxonomy" id="9606"/>
</organismHost>
<name>PG125_VACCC</name>
<reference key="1">
    <citation type="journal article" date="1990" name="Virology">
        <title>The complete DNA sequence of vaccinia virus.</title>
        <authorList>
            <person name="Goebel S.J."/>
            <person name="Johnson G.P."/>
            <person name="Perkus M.E."/>
            <person name="Davis S.W."/>
            <person name="Winslow J.P."/>
            <person name="Paoletti E."/>
        </authorList>
    </citation>
    <scope>NUCLEOTIDE SEQUENCE [LARGE SCALE GENOMIC DNA]</scope>
</reference>
<reference key="2">
    <citation type="journal article" date="1990" name="Virology">
        <title>Appendix to 'The complete DNA sequence of vaccinia virus'.</title>
        <authorList>
            <person name="Goebel S.J."/>
            <person name="Johnson G.P."/>
            <person name="Perkus M.E."/>
            <person name="Davis S.W."/>
            <person name="Winslow J.P."/>
            <person name="Paoletti E."/>
        </authorList>
    </citation>
    <scope>COMPLETE GENOME</scope>
</reference>
<gene>
    <name type="primary">OPG125</name>
    <name type="ORF">D13L</name>
</gene>
<evidence type="ECO:0000250" key="1">
    <source>
        <dbReference type="UniProtKB" id="P68440"/>
    </source>
</evidence>
<evidence type="ECO:0000305" key="2"/>
<comment type="function">
    <text evidence="1">Scaffold protein which forms a transitory spherical honeycomb lattice providing curvature and rigidity to the convex membrane of crescent and immature virions (IV). This association occurs concomitantly with viral membrane formation. Targeted by the drug rifampicin, which prevents the formation of this lattice, and hence virus morphogenesis. In the presence of rifampicin, irregularly shaped membranes that lack the honeycomb layer accumulate around areas of electron-dense viroplasm. This layer is lost from virions during maturation from IV to mature virion (MV), through the proteolysis of OPG158 N-terminus.</text>
</comment>
<comment type="subunit">
    <text evidence="1">Homotrimer. Self-assembles to form a layer. Interacts with OPG158 (via N-terminus); this interaction is necessary for OPG125 association with membranes.</text>
</comment>
<comment type="subcellular location">
    <subcellularLocation>
        <location evidence="1">Membrane</location>
        <topology evidence="1">Peripheral membrane protein</topology>
    </subcellularLocation>
    <text evidence="1">Associates transitorily with crescent and IV membranes.</text>
</comment>
<comment type="induction">
    <text>Expressed in the early phase of the viral replicative cycle.</text>
</comment>
<comment type="miscellaneous">
    <text>Displays structure similarities to capsid proteins.</text>
</comment>
<comment type="similarity">
    <text evidence="2">Belongs to the orthopoxvirus protein OPG125 family.</text>
</comment>
<organism>
    <name type="scientific">Vaccinia virus (strain Copenhagen)</name>
    <name type="common">VACV</name>
    <dbReference type="NCBI Taxonomy" id="10249"/>
    <lineage>
        <taxon>Viruses</taxon>
        <taxon>Varidnaviria</taxon>
        <taxon>Bamfordvirae</taxon>
        <taxon>Nucleocytoviricota</taxon>
        <taxon>Pokkesviricetes</taxon>
        <taxon>Chitovirales</taxon>
        <taxon>Poxviridae</taxon>
        <taxon>Chordopoxvirinae</taxon>
        <taxon>Orthopoxvirus</taxon>
        <taxon>Vaccinia virus</taxon>
    </lineage>
</organism>
<accession>P68441</accession>
<accession>P04321</accession>
<accession>Q85329</accession>